<keyword id="KW-0328">Glycosyltransferase</keyword>
<keyword id="KW-0460">Magnesium</keyword>
<keyword id="KW-0665">Pyrimidine biosynthesis</keyword>
<keyword id="KW-0808">Transferase</keyword>
<evidence type="ECO:0000250" key="1"/>
<evidence type="ECO:0000305" key="2"/>
<protein>
    <recommendedName>
        <fullName>Orotate phosphoribosyltransferase</fullName>
        <shortName>OPRT</shortName>
        <shortName>OPRTase</shortName>
        <ecNumber>2.4.2.10</ecNumber>
    </recommendedName>
</protein>
<dbReference type="EC" id="2.4.2.10"/>
<dbReference type="EMBL" id="AF068902">
    <property type="protein sequence ID" value="AAC95453.1"/>
    <property type="molecule type" value="Genomic_DNA"/>
</dbReference>
<dbReference type="EMBL" id="CP001015">
    <property type="protein sequence ID" value="ACF55018.1"/>
    <property type="molecule type" value="Genomic_DNA"/>
</dbReference>
<dbReference type="SMR" id="B5E302"/>
<dbReference type="KEGG" id="spx:SPG_0632"/>
<dbReference type="HOGENOM" id="CLU_074878_1_1_9"/>
<dbReference type="UniPathway" id="UPA00070">
    <property type="reaction ID" value="UER00119"/>
</dbReference>
<dbReference type="GO" id="GO:0000287">
    <property type="term" value="F:magnesium ion binding"/>
    <property type="evidence" value="ECO:0007669"/>
    <property type="project" value="UniProtKB-UniRule"/>
</dbReference>
<dbReference type="GO" id="GO:0004588">
    <property type="term" value="F:orotate phosphoribosyltransferase activity"/>
    <property type="evidence" value="ECO:0007669"/>
    <property type="project" value="UniProtKB-UniRule"/>
</dbReference>
<dbReference type="GO" id="GO:0044205">
    <property type="term" value="P:'de novo' UMP biosynthetic process"/>
    <property type="evidence" value="ECO:0007669"/>
    <property type="project" value="UniProtKB-UniRule"/>
</dbReference>
<dbReference type="GO" id="GO:0019856">
    <property type="term" value="P:pyrimidine nucleobase biosynthetic process"/>
    <property type="evidence" value="ECO:0007669"/>
    <property type="project" value="TreeGrafter"/>
</dbReference>
<dbReference type="CDD" id="cd06223">
    <property type="entry name" value="PRTases_typeI"/>
    <property type="match status" value="1"/>
</dbReference>
<dbReference type="Gene3D" id="3.40.50.2020">
    <property type="match status" value="1"/>
</dbReference>
<dbReference type="HAMAP" id="MF_01208">
    <property type="entry name" value="PyrE"/>
    <property type="match status" value="1"/>
</dbReference>
<dbReference type="InterPro" id="IPR023031">
    <property type="entry name" value="OPRT"/>
</dbReference>
<dbReference type="InterPro" id="IPR004467">
    <property type="entry name" value="Or_phspho_trans_dom"/>
</dbReference>
<dbReference type="InterPro" id="IPR000836">
    <property type="entry name" value="PRibTrfase_dom"/>
</dbReference>
<dbReference type="InterPro" id="IPR029057">
    <property type="entry name" value="PRTase-like"/>
</dbReference>
<dbReference type="NCBIfam" id="TIGR00336">
    <property type="entry name" value="pyrE"/>
    <property type="match status" value="1"/>
</dbReference>
<dbReference type="PANTHER" id="PTHR19278">
    <property type="entry name" value="OROTATE PHOSPHORIBOSYLTRANSFERASE"/>
    <property type="match status" value="1"/>
</dbReference>
<dbReference type="PANTHER" id="PTHR19278:SF9">
    <property type="entry name" value="URIDINE 5'-MONOPHOSPHATE SYNTHASE"/>
    <property type="match status" value="1"/>
</dbReference>
<dbReference type="Pfam" id="PF00156">
    <property type="entry name" value="Pribosyltran"/>
    <property type="match status" value="1"/>
</dbReference>
<dbReference type="SUPFAM" id="SSF53271">
    <property type="entry name" value="PRTase-like"/>
    <property type="match status" value="1"/>
</dbReference>
<dbReference type="PROSITE" id="PS00103">
    <property type="entry name" value="PUR_PYR_PR_TRANSFER"/>
    <property type="match status" value="1"/>
</dbReference>
<organism>
    <name type="scientific">Streptococcus pneumoniae serotype 19F (strain G54)</name>
    <dbReference type="NCBI Taxonomy" id="512566"/>
    <lineage>
        <taxon>Bacteria</taxon>
        <taxon>Bacillati</taxon>
        <taxon>Bacillota</taxon>
        <taxon>Bacilli</taxon>
        <taxon>Lactobacillales</taxon>
        <taxon>Streptococcaceae</taxon>
        <taxon>Streptococcus</taxon>
    </lineage>
</organism>
<proteinExistence type="inferred from homology"/>
<sequence length="210" mass="22826">MTLAKDIASHLLKIQAVYLKPEEPFTWASGIKSPIYTDNRVTLAYPETRTLIENGFVDAIKEAFPEVEVIAGTATAGIPHGAIIADKMNLPFAYIRSKPKDHGAGNQIEGRVAQGQKMVVVEDLISTGGSVLEAVAAAKREGADVLGVVAIFSYQLPKADKNFADAGVKLVTLSNYSELIHLAQEEGYITPEGLDLLKRFKEDQENWQEG</sequence>
<feature type="chain" id="PRO_0000389169" description="Orotate phosphoribosyltransferase">
    <location>
        <begin position="1"/>
        <end position="210"/>
    </location>
</feature>
<feature type="binding site" evidence="1">
    <location>
        <position position="96"/>
    </location>
    <ligand>
        <name>5-phospho-alpha-D-ribose 1-diphosphate</name>
        <dbReference type="ChEBI" id="CHEBI:58017"/>
        <note>ligand shared between dimeric partners</note>
    </ligand>
</feature>
<feature type="binding site" evidence="1">
    <location>
        <position position="100"/>
    </location>
    <ligand>
        <name>5-phospho-alpha-D-ribose 1-diphosphate</name>
        <dbReference type="ChEBI" id="CHEBI:58017"/>
        <note>ligand shared between dimeric partners</note>
    </ligand>
</feature>
<feature type="binding site" evidence="1">
    <location>
        <position position="102"/>
    </location>
    <ligand>
        <name>5-phospho-alpha-D-ribose 1-diphosphate</name>
        <dbReference type="ChEBI" id="CHEBI:58017"/>
        <note>ligand shared between dimeric partners</note>
    </ligand>
</feature>
<feature type="binding site" description="in other chain" evidence="1">
    <location>
        <begin position="122"/>
        <end position="130"/>
    </location>
    <ligand>
        <name>5-phospho-alpha-D-ribose 1-diphosphate</name>
        <dbReference type="ChEBI" id="CHEBI:58017"/>
        <note>ligand shared between dimeric partners</note>
    </ligand>
</feature>
<feature type="binding site" evidence="1">
    <location>
        <position position="126"/>
    </location>
    <ligand>
        <name>orotate</name>
        <dbReference type="ChEBI" id="CHEBI:30839"/>
    </ligand>
</feature>
<reference key="1">
    <citation type="journal article" date="1998" name="Microbiology">
        <title>Unconventional organization of the division and cell wall gene cluster of Streptococcus pneumoniae.</title>
        <authorList>
            <person name="Massidda O."/>
            <person name="Anderluzzi D."/>
            <person name="Friedli L."/>
            <person name="Feger G."/>
        </authorList>
    </citation>
    <scope>NUCLEOTIDE SEQUENCE [GENOMIC DNA]</scope>
</reference>
<reference key="2">
    <citation type="journal article" date="2001" name="Microb. Drug Resist.">
        <title>Annotated draft genomic sequence from a Streptococcus pneumoniae type 19F clinical isolate.</title>
        <authorList>
            <person name="Dopazo J."/>
            <person name="Mendoza A."/>
            <person name="Herrero J."/>
            <person name="Caldara F."/>
            <person name="Humbert Y."/>
            <person name="Friedli L."/>
            <person name="Guerrier M."/>
            <person name="Grand-Schenk E."/>
            <person name="Gandin C."/>
            <person name="de Francesco M."/>
            <person name="Polissi A."/>
            <person name="Buell G."/>
            <person name="Feger G."/>
            <person name="Garcia E."/>
            <person name="Peitsch M."/>
            <person name="Garcia-Bustos J.F."/>
        </authorList>
    </citation>
    <scope>NUCLEOTIDE SEQUENCE [LARGE SCALE GENOMIC DNA]</scope>
    <source>
        <strain>G54</strain>
    </source>
</reference>
<reference key="3">
    <citation type="submission" date="2008-03" db="EMBL/GenBank/DDBJ databases">
        <title>Pneumococcal beta glucoside metabolism investigated by whole genome comparison.</title>
        <authorList>
            <person name="Mulas L."/>
            <person name="Trappetti C."/>
            <person name="Hakenbeck R."/>
            <person name="Iannelli F."/>
            <person name="Pozzi G."/>
            <person name="Davidsen T.M."/>
            <person name="Tettelin H."/>
            <person name="Oggioni M."/>
        </authorList>
    </citation>
    <scope>NUCLEOTIDE SEQUENCE [LARGE SCALE GENOMIC DNA]</scope>
    <source>
        <strain>G54</strain>
    </source>
</reference>
<gene>
    <name type="primary">pyrE</name>
    <name type="ordered locus">SPG_0632</name>
</gene>
<comment type="function">
    <text evidence="1">Catalyzes the transfer of a ribosyl phosphate group from 5-phosphoribose 1-diphosphate to orotate, leading to the formation of orotidine monophosphate (OMP).</text>
</comment>
<comment type="catalytic activity">
    <reaction>
        <text>orotidine 5'-phosphate + diphosphate = orotate + 5-phospho-alpha-D-ribose 1-diphosphate</text>
        <dbReference type="Rhea" id="RHEA:10380"/>
        <dbReference type="ChEBI" id="CHEBI:30839"/>
        <dbReference type="ChEBI" id="CHEBI:33019"/>
        <dbReference type="ChEBI" id="CHEBI:57538"/>
        <dbReference type="ChEBI" id="CHEBI:58017"/>
        <dbReference type="EC" id="2.4.2.10"/>
    </reaction>
</comment>
<comment type="cofactor">
    <cofactor evidence="1">
        <name>Mg(2+)</name>
        <dbReference type="ChEBI" id="CHEBI:18420"/>
    </cofactor>
</comment>
<comment type="pathway">
    <text>Pyrimidine metabolism; UMP biosynthesis via de novo pathway; UMP from orotate: step 1/2.</text>
</comment>
<comment type="subunit">
    <text evidence="1">Homodimer.</text>
</comment>
<comment type="similarity">
    <text evidence="2">Belongs to the purine/pyrimidine phosphoribosyltransferase family. PyrE subfamily.</text>
</comment>
<name>PYRE_STRP4</name>
<accession>B5E302</accession>
<accession>Q97RT8</accession>
<accession>Q9ZHA6</accession>